<sequence length="456" mass="48689">MDGDLAIGKMASSTSPMGPIDSLELLDLLFDRQDGVLRHVELGEDWGHGEDQVLPGADSDDFLNSILGSGDSDSPTWSPAASDSGISEDLPSDTQDTPPHGGVPATPAGCHSVESGKGPCPSYHPGPTCPARHLGPVAPRLETSVAIDLEMWSPGVYAEEQTDLADSPSRYNLTVKDLLLSSSSGDLQQHHLAAPHLLRPGTGHCQELVLTEDEKKLLAKEGITLPTQLPLTKYEERMLKKIRRKIRNKQSAQESRKKKKEYIDGLETRMSACTAQNQELQRKVLHLEKQNLSLLEQLKKLQAIVVQSTSKSAQTGTCIAVLLFSFALIVLPSISPFASNRAESPGDFAPVRVFSRTLHNDAASRVAPDTAPGSEAPGPGPNTGALQERSPGSPPGEWESQDTRALDNSTEDLDNSTLVQGNSVKELDQATLLDCAPPEPAVSPGHVGLEAAGGEL</sequence>
<evidence type="ECO:0000250" key="1"/>
<evidence type="ECO:0000250" key="2">
    <source>
        <dbReference type="UniProtKB" id="Q68CJ9"/>
    </source>
</evidence>
<evidence type="ECO:0000250" key="3">
    <source>
        <dbReference type="UniProtKB" id="Q91XE9"/>
    </source>
</evidence>
<evidence type="ECO:0000255" key="4"/>
<evidence type="ECO:0000255" key="5">
    <source>
        <dbReference type="PROSITE-ProRule" id="PRU00978"/>
    </source>
</evidence>
<evidence type="ECO:0000256" key="6">
    <source>
        <dbReference type="SAM" id="MobiDB-lite"/>
    </source>
</evidence>
<evidence type="ECO:0000305" key="7"/>
<gene>
    <name type="primary">CREB3L3</name>
</gene>
<name>CR3L3_BOVIN</name>
<proteinExistence type="evidence at transcript level"/>
<accession>Q3SYZ3</accession>
<protein>
    <recommendedName>
        <fullName>Cyclic AMP-responsive element-binding protein 3-like protein 3</fullName>
        <shortName>cAMP-responsive element-binding protein 3-like protein 3</shortName>
    </recommendedName>
    <component>
        <recommendedName>
            <fullName>Processed cyclic AMP-responsive element-binding protein 3-like protein 3</fullName>
        </recommendedName>
    </component>
</protein>
<feature type="chain" id="PRO_0000288073" description="Cyclic AMP-responsive element-binding protein 3-like protein 3">
    <location>
        <begin position="1"/>
        <end position="456"/>
    </location>
</feature>
<feature type="chain" id="PRO_0000296215" description="Processed cyclic AMP-responsive element-binding protein 3-like protein 3">
    <location>
        <begin position="1"/>
        <end status="unknown"/>
    </location>
</feature>
<feature type="topological domain" description="Cytoplasmic" evidence="4">
    <location>
        <begin position="1"/>
        <end position="317"/>
    </location>
</feature>
<feature type="transmembrane region" description="Helical; Signal-anchor for type II membrane protein" evidence="4">
    <location>
        <begin position="318"/>
        <end position="338"/>
    </location>
</feature>
<feature type="topological domain" description="Lumenal" evidence="4">
    <location>
        <begin position="339"/>
        <end position="456"/>
    </location>
</feature>
<feature type="domain" description="bZIP" evidence="5">
    <location>
        <begin position="238"/>
        <end position="301"/>
    </location>
</feature>
<feature type="region of interest" description="Disordered" evidence="6">
    <location>
        <begin position="1"/>
        <end position="20"/>
    </location>
</feature>
<feature type="region of interest" description="Disordered" evidence="6">
    <location>
        <begin position="47"/>
        <end position="120"/>
    </location>
</feature>
<feature type="region of interest" description="Basic motif" evidence="5">
    <location>
        <begin position="240"/>
        <end position="269"/>
    </location>
</feature>
<feature type="region of interest" description="Leucine-zipper" evidence="5">
    <location>
        <begin position="280"/>
        <end position="301"/>
    </location>
</feature>
<feature type="region of interest" description="Disordered" evidence="6">
    <location>
        <begin position="365"/>
        <end position="423"/>
    </location>
</feature>
<feature type="region of interest" description="Disordered" evidence="6">
    <location>
        <begin position="435"/>
        <end position="456"/>
    </location>
</feature>
<feature type="compositionally biased region" description="Polar residues" evidence="6">
    <location>
        <begin position="71"/>
        <end position="85"/>
    </location>
</feature>
<feature type="site" description="Cleavage; by PS1" evidence="1">
    <location>
        <begin position="358"/>
        <end position="359"/>
    </location>
</feature>
<feature type="glycosylation site" description="N-linked (GlcNAc...) asparagine" evidence="4">
    <location>
        <position position="408"/>
    </location>
</feature>
<feature type="glycosylation site" description="N-linked (GlcNAc...) asparagine" evidence="4">
    <location>
        <position position="415"/>
    </location>
</feature>
<feature type="cross-link" description="Glycyl lysine isopeptide (Lys-Gly) (interchain with G-Cter in ubiquitin)" evidence="2">
    <location>
        <position position="289"/>
    </location>
</feature>
<dbReference type="EMBL" id="BC103320">
    <property type="protein sequence ID" value="AAI03321.1"/>
    <property type="molecule type" value="mRNA"/>
</dbReference>
<dbReference type="RefSeq" id="NP_001029604.1">
    <property type="nucleotide sequence ID" value="NM_001034432.2"/>
</dbReference>
<dbReference type="SMR" id="Q3SYZ3"/>
<dbReference type="FunCoup" id="Q3SYZ3">
    <property type="interactions" value="225"/>
</dbReference>
<dbReference type="STRING" id="9913.ENSBTAP00000013478"/>
<dbReference type="GlyCosmos" id="Q3SYZ3">
    <property type="glycosylation" value="2 sites, No reported glycans"/>
</dbReference>
<dbReference type="GlyGen" id="Q3SYZ3">
    <property type="glycosylation" value="2 sites"/>
</dbReference>
<dbReference type="PaxDb" id="9913-ENSBTAP00000013478"/>
<dbReference type="GeneID" id="513010"/>
<dbReference type="KEGG" id="bta:513010"/>
<dbReference type="CTD" id="84699"/>
<dbReference type="VEuPathDB" id="HostDB:ENSBTAG00000010215"/>
<dbReference type="eggNOG" id="KOG0709">
    <property type="taxonomic scope" value="Eukaryota"/>
</dbReference>
<dbReference type="HOGENOM" id="CLU_047257_1_0_1"/>
<dbReference type="InParanoid" id="Q3SYZ3"/>
<dbReference type="OMA" id="DSHFFGT"/>
<dbReference type="OrthoDB" id="674948at2759"/>
<dbReference type="TreeFam" id="TF316079"/>
<dbReference type="Reactome" id="R-BTA-8874211">
    <property type="pathway name" value="CREB3 factors activate genes"/>
</dbReference>
<dbReference type="Proteomes" id="UP000009136">
    <property type="component" value="Chromosome 7"/>
</dbReference>
<dbReference type="Bgee" id="ENSBTAG00000010215">
    <property type="expression patterns" value="Expressed in liver and 27 other cell types or tissues"/>
</dbReference>
<dbReference type="GO" id="GO:0005789">
    <property type="term" value="C:endoplasmic reticulum membrane"/>
    <property type="evidence" value="ECO:0007669"/>
    <property type="project" value="UniProtKB-SubCell"/>
</dbReference>
<dbReference type="GO" id="GO:0005634">
    <property type="term" value="C:nucleus"/>
    <property type="evidence" value="ECO:0000318"/>
    <property type="project" value="GO_Central"/>
</dbReference>
<dbReference type="GO" id="GO:0000981">
    <property type="term" value="F:DNA-binding transcription factor activity, RNA polymerase II-specific"/>
    <property type="evidence" value="ECO:0000318"/>
    <property type="project" value="GO_Central"/>
</dbReference>
<dbReference type="GO" id="GO:0000978">
    <property type="term" value="F:RNA polymerase II cis-regulatory region sequence-specific DNA binding"/>
    <property type="evidence" value="ECO:0000318"/>
    <property type="project" value="GO_Central"/>
</dbReference>
<dbReference type="GO" id="GO:0006357">
    <property type="term" value="P:regulation of transcription by RNA polymerase II"/>
    <property type="evidence" value="ECO:0000318"/>
    <property type="project" value="GO_Central"/>
</dbReference>
<dbReference type="GO" id="GO:0006986">
    <property type="term" value="P:response to unfolded protein"/>
    <property type="evidence" value="ECO:0007669"/>
    <property type="project" value="UniProtKB-KW"/>
</dbReference>
<dbReference type="CDD" id="cd14689">
    <property type="entry name" value="bZIP_CREB3"/>
    <property type="match status" value="1"/>
</dbReference>
<dbReference type="FunFam" id="1.20.5.170:FF:000042">
    <property type="entry name" value="Cyclic AMP-responsive element-binding protein 3-like protein 3"/>
    <property type="match status" value="1"/>
</dbReference>
<dbReference type="Gene3D" id="1.20.5.170">
    <property type="match status" value="1"/>
</dbReference>
<dbReference type="InterPro" id="IPR004827">
    <property type="entry name" value="bZIP"/>
</dbReference>
<dbReference type="InterPro" id="IPR046347">
    <property type="entry name" value="bZIP_sf"/>
</dbReference>
<dbReference type="InterPro" id="IPR051381">
    <property type="entry name" value="CREB_ATF_subfamily"/>
</dbReference>
<dbReference type="PANTHER" id="PTHR45996">
    <property type="entry name" value="AGAP001464-PB"/>
    <property type="match status" value="1"/>
</dbReference>
<dbReference type="PANTHER" id="PTHR45996:SF1">
    <property type="entry name" value="CYCLIC AMP-RESPONSIVE ELEMENT-BINDING PROTEIN 3-LIKE PROTEIN 3"/>
    <property type="match status" value="1"/>
</dbReference>
<dbReference type="Pfam" id="PF00170">
    <property type="entry name" value="bZIP_1"/>
    <property type="match status" value="1"/>
</dbReference>
<dbReference type="SMART" id="SM00338">
    <property type="entry name" value="BRLZ"/>
    <property type="match status" value="1"/>
</dbReference>
<dbReference type="SUPFAM" id="SSF57959">
    <property type="entry name" value="Leucine zipper domain"/>
    <property type="match status" value="1"/>
</dbReference>
<dbReference type="PROSITE" id="PS50217">
    <property type="entry name" value="BZIP"/>
    <property type="match status" value="1"/>
</dbReference>
<dbReference type="PROSITE" id="PS00036">
    <property type="entry name" value="BZIP_BASIC"/>
    <property type="match status" value="1"/>
</dbReference>
<comment type="function">
    <text evidence="1 3">Transcription factor that may act during endoplasmic reticulum stress by activating unfolded protein response target genes. Activated in response to cAMP stimulation. In vitro, binds the cAMP response element (CRE). Activates transcription through box-B element and CRE. Seems to function synergistically with ATF6. In acute inflammatory response, may activate expression of acute phase response (APR) genes. May be involved in growth suppression (By similarity). Regulates FGF21 transcription (By similarity). Plays a crucial role in the regulation of triglyceride metabolism and is required for the maintenance of normal plasma triglyceride concentrations (By similarity).</text>
</comment>
<comment type="subunit">
    <text evidence="1 2 3">Binds DNA as a dimer. May form homodimers (By similarity). Interacts with ATF6 (By similarity). Interacts with SYNV1/HRD1; this interaction leads to CREB3L3 ubiquitination and proteasomal degradation (By similarity).</text>
</comment>
<comment type="subcellular location">
    <subcellularLocation>
        <location evidence="2">Endoplasmic reticulum membrane</location>
        <topology evidence="2">Single-pass type II membrane protein</topology>
    </subcellularLocation>
</comment>
<comment type="subcellular location">
    <molecule>Processed cyclic AMP-responsive element-binding protein 3-like protein 3</molecule>
    <subcellularLocation>
        <location evidence="2">Nucleus</location>
    </subcellularLocation>
    <text evidence="1">Under ER stress the cleaved N-terminal cytoplasmic domain translocates into the nucleus.</text>
</comment>
<comment type="PTM">
    <text evidence="1">Controlled by regulated intramembrane proteolysis (RIP). Following ER stress a fragment containing the cytoplasmic transcription factor domain is released by proteolysis. The cleavage seems to be performed sequentially by site-1 and site-2 proteases (PS1 and PS2) (By similarity).</text>
</comment>
<comment type="PTM">
    <text evidence="1">N-glycosylation is required for optimal proteolytic activation.</text>
</comment>
<comment type="PTM">
    <text evidence="2">Ubiquitinated at Lys-289 by SYNV1/HRD1 via 'Lys-27'-linked ubiquitin.</text>
</comment>
<comment type="similarity">
    <text evidence="7">Belongs to the bZIP family. ATF subfamily.</text>
</comment>
<reference key="1">
    <citation type="submission" date="2005-08" db="EMBL/GenBank/DDBJ databases">
        <authorList>
            <consortium name="NIH - Mammalian Gene Collection (MGC) project"/>
        </authorList>
    </citation>
    <scope>NUCLEOTIDE SEQUENCE [LARGE SCALE MRNA]</scope>
    <source>
        <strain>Crossbred X Angus</strain>
        <tissue>Ileum</tissue>
    </source>
</reference>
<organism>
    <name type="scientific">Bos taurus</name>
    <name type="common">Bovine</name>
    <dbReference type="NCBI Taxonomy" id="9913"/>
    <lineage>
        <taxon>Eukaryota</taxon>
        <taxon>Metazoa</taxon>
        <taxon>Chordata</taxon>
        <taxon>Craniata</taxon>
        <taxon>Vertebrata</taxon>
        <taxon>Euteleostomi</taxon>
        <taxon>Mammalia</taxon>
        <taxon>Eutheria</taxon>
        <taxon>Laurasiatheria</taxon>
        <taxon>Artiodactyla</taxon>
        <taxon>Ruminantia</taxon>
        <taxon>Pecora</taxon>
        <taxon>Bovidae</taxon>
        <taxon>Bovinae</taxon>
        <taxon>Bos</taxon>
    </lineage>
</organism>
<keyword id="KW-0010">Activator</keyword>
<keyword id="KW-0238">DNA-binding</keyword>
<keyword id="KW-0256">Endoplasmic reticulum</keyword>
<keyword id="KW-0325">Glycoprotein</keyword>
<keyword id="KW-1017">Isopeptide bond</keyword>
<keyword id="KW-0472">Membrane</keyword>
<keyword id="KW-0539">Nucleus</keyword>
<keyword id="KW-1185">Reference proteome</keyword>
<keyword id="KW-0735">Signal-anchor</keyword>
<keyword id="KW-0804">Transcription</keyword>
<keyword id="KW-0805">Transcription regulation</keyword>
<keyword id="KW-0812">Transmembrane</keyword>
<keyword id="KW-1133">Transmembrane helix</keyword>
<keyword id="KW-0832">Ubl conjugation</keyword>
<keyword id="KW-0834">Unfolded protein response</keyword>